<dbReference type="EMBL" id="X69764">
    <property type="protein sequence ID" value="CAA49418.1"/>
    <property type="molecule type" value="mRNA"/>
</dbReference>
<dbReference type="PIR" id="S30223">
    <property type="entry name" value="S30223"/>
</dbReference>
<dbReference type="RefSeq" id="NP_001084134.1">
    <property type="nucleotide sequence ID" value="NM_001090665.1"/>
</dbReference>
<dbReference type="SMR" id="P30151"/>
<dbReference type="BioGRID" id="100651">
    <property type="interactions" value="1"/>
</dbReference>
<dbReference type="IntAct" id="P30151">
    <property type="interactions" value="2"/>
</dbReference>
<dbReference type="DNASU" id="399326"/>
<dbReference type="GeneID" id="399326"/>
<dbReference type="KEGG" id="xla:399326"/>
<dbReference type="AGR" id="Xenbase:XB-GENE-966960"/>
<dbReference type="CTD" id="399326"/>
<dbReference type="Xenbase" id="XB-GENE-966960">
    <property type="gene designation" value="eef1b2.L"/>
</dbReference>
<dbReference type="OrthoDB" id="331763at2759"/>
<dbReference type="Proteomes" id="UP000186698">
    <property type="component" value="Chromosome 9_10L"/>
</dbReference>
<dbReference type="Bgee" id="399326">
    <property type="expression patterns" value="Expressed in oocyte and 19 other cell types or tissues"/>
</dbReference>
<dbReference type="GO" id="GO:0005829">
    <property type="term" value="C:cytosol"/>
    <property type="evidence" value="ECO:0000318"/>
    <property type="project" value="GO_Central"/>
</dbReference>
<dbReference type="GO" id="GO:0005853">
    <property type="term" value="C:eukaryotic translation elongation factor 1 complex"/>
    <property type="evidence" value="ECO:0007669"/>
    <property type="project" value="InterPro"/>
</dbReference>
<dbReference type="GO" id="GO:0005085">
    <property type="term" value="F:guanyl-nucleotide exchange factor activity"/>
    <property type="evidence" value="ECO:0000318"/>
    <property type="project" value="GO_Central"/>
</dbReference>
<dbReference type="GO" id="GO:0003746">
    <property type="term" value="F:translation elongation factor activity"/>
    <property type="evidence" value="ECO:0007669"/>
    <property type="project" value="UniProtKB-KW"/>
</dbReference>
<dbReference type="GO" id="GO:0006414">
    <property type="term" value="P:translational elongation"/>
    <property type="evidence" value="ECO:0000318"/>
    <property type="project" value="GO_Central"/>
</dbReference>
<dbReference type="CDD" id="cd00292">
    <property type="entry name" value="EF1B"/>
    <property type="match status" value="1"/>
</dbReference>
<dbReference type="CDD" id="cd10308">
    <property type="entry name" value="GST_C_eEF1b_like"/>
    <property type="match status" value="1"/>
</dbReference>
<dbReference type="FunFam" id="3.30.70.60:FF:000001">
    <property type="entry name" value="Elongation factor 1-beta 1 like"/>
    <property type="match status" value="1"/>
</dbReference>
<dbReference type="FunFam" id="1.20.1050.130:FF:000001">
    <property type="entry name" value="Putative Elongation factor 1-beta"/>
    <property type="match status" value="1"/>
</dbReference>
<dbReference type="Gene3D" id="1.20.1050.130">
    <property type="match status" value="1"/>
</dbReference>
<dbReference type="Gene3D" id="3.30.70.60">
    <property type="match status" value="1"/>
</dbReference>
<dbReference type="InterPro" id="IPR036219">
    <property type="entry name" value="eEF-1beta-like_sf"/>
</dbReference>
<dbReference type="InterPro" id="IPR018940">
    <property type="entry name" value="EF-1_beta_acid_region_euk"/>
</dbReference>
<dbReference type="InterPro" id="IPR049720">
    <property type="entry name" value="EF1B_bsu/dsu"/>
</dbReference>
<dbReference type="InterPro" id="IPR014038">
    <property type="entry name" value="EF1B_bsu/dsu_GNE"/>
</dbReference>
<dbReference type="InterPro" id="IPR036282">
    <property type="entry name" value="Glutathione-S-Trfase_C_sf"/>
</dbReference>
<dbReference type="InterPro" id="IPR014717">
    <property type="entry name" value="Transl_elong_EF1B/ribsomal_bS6"/>
</dbReference>
<dbReference type="InterPro" id="IPR001326">
    <property type="entry name" value="Transl_elong_EF1B_B/D_CS"/>
</dbReference>
<dbReference type="PANTHER" id="PTHR11595">
    <property type="entry name" value="EF-HAND AND COILED-COIL DOMAIN-CONTAINING FAMILY MEMBER"/>
    <property type="match status" value="1"/>
</dbReference>
<dbReference type="PANTHER" id="PTHR11595:SF21">
    <property type="entry name" value="ELONGATION FACTOR 1-BETA"/>
    <property type="match status" value="1"/>
</dbReference>
<dbReference type="Pfam" id="PF10587">
    <property type="entry name" value="EF-1_beta_acid"/>
    <property type="match status" value="1"/>
</dbReference>
<dbReference type="Pfam" id="PF00736">
    <property type="entry name" value="EF1_GNE"/>
    <property type="match status" value="1"/>
</dbReference>
<dbReference type="SMART" id="SM01182">
    <property type="entry name" value="EF-1_beta_acid"/>
    <property type="match status" value="1"/>
</dbReference>
<dbReference type="SMART" id="SM00888">
    <property type="entry name" value="EF1_GNE"/>
    <property type="match status" value="1"/>
</dbReference>
<dbReference type="SUPFAM" id="SSF54984">
    <property type="entry name" value="eEF-1beta-like"/>
    <property type="match status" value="1"/>
</dbReference>
<dbReference type="SUPFAM" id="SSF47616">
    <property type="entry name" value="GST C-terminal domain-like"/>
    <property type="match status" value="1"/>
</dbReference>
<dbReference type="PROSITE" id="PS00824">
    <property type="entry name" value="EF1BD_1"/>
    <property type="match status" value="1"/>
</dbReference>
<dbReference type="PROSITE" id="PS00825">
    <property type="entry name" value="EF1BD_2"/>
    <property type="match status" value="1"/>
</dbReference>
<name>EF1B_XENLA</name>
<organism>
    <name type="scientific">Xenopus laevis</name>
    <name type="common">African clawed frog</name>
    <dbReference type="NCBI Taxonomy" id="8355"/>
    <lineage>
        <taxon>Eukaryota</taxon>
        <taxon>Metazoa</taxon>
        <taxon>Chordata</taxon>
        <taxon>Craniata</taxon>
        <taxon>Vertebrata</taxon>
        <taxon>Euteleostomi</taxon>
        <taxon>Amphibia</taxon>
        <taxon>Batrachia</taxon>
        <taxon>Anura</taxon>
        <taxon>Pipoidea</taxon>
        <taxon>Pipidae</taxon>
        <taxon>Xenopodinae</taxon>
        <taxon>Xenopus</taxon>
        <taxon>Xenopus</taxon>
    </lineage>
</organism>
<keyword id="KW-0903">Direct protein sequencing</keyword>
<keyword id="KW-0251">Elongation factor</keyword>
<keyword id="KW-0597">Phosphoprotein</keyword>
<keyword id="KW-0648">Protein biosynthesis</keyword>
<keyword id="KW-1185">Reference proteome</keyword>
<reference key="1">
    <citation type="journal article" date="1993" name="Nucleic Acids Res.">
        <title>Elongation factor 1 contains two homologous guanine-nucleotide exchange proteins as shown from the molecular cloning of beta and delta subunits.</title>
        <authorList>
            <person name="Cormier P."/>
            <person name="Osborne B."/>
            <person name="Morales J."/>
            <person name="Bassez T."/>
            <person name="Minella O."/>
            <person name="Mulner O."/>
            <person name="Belle R."/>
            <person name="Mulner-Lorillon O."/>
        </authorList>
    </citation>
    <scope>NUCLEOTIDE SEQUENCE [MRNA]</scope>
    <scope>PROTEIN SEQUENCE OF 18-26; 148-154 AND 208-220</scope>
    <source>
        <tissue>Ovary</tissue>
    </source>
</reference>
<reference key="2">
    <citation type="journal article" date="1989" name="FEBS Lett.">
        <title>A purified complex from Xenopus oocytes contains a p47 protein, an in vivo substrate of MPF, and a p30 protein respectively homologous to elongation factors EF-1 gamma and EF-1 beta.</title>
        <authorList>
            <person name="Belle R."/>
            <person name="Derancourt J."/>
            <person name="Poulhe R."/>
            <person name="Capony J.-P."/>
            <person name="Ozon R."/>
            <person name="Mulner-Lorillon O."/>
        </authorList>
    </citation>
    <scope>PROTEIN SEQUENCE OF 18-26; 148-154 AND 208-220</scope>
</reference>
<reference key="3">
    <citation type="journal article" date="1991" name="J. Biol. Chem.">
        <title>A major substrate of maturation promoting factor identified as elongation factor 1 beta gamma delta in Xenopus laevis.</title>
        <authorList>
            <person name="Janssen G.M.C."/>
            <person name="Morales J."/>
            <person name="Schipper A."/>
            <person name="Labbes J.C."/>
            <person name="Mulner-Lorillon O."/>
            <person name="Belle R."/>
            <person name="Moeller W."/>
        </authorList>
    </citation>
    <scope>PROTEIN SEQUENCE OF 148-153 AND 207-220</scope>
</reference>
<sequence length="227" mass="25175">MGFGDLKSPAGLKVLKEFLADKSYIEGYVPSQADVAVFDALSAAPPADLFHALRWYNHIKSYEKQKSSLPGVKKALGNYGPVNIEDTTGSAAKETKEEDDDDIDLFGSDDEEESEDAKRVRDERLAQYEAKKSKKPTLIAKSSILLDVKPWDDETDMGKLEECLRSIQMDGLLWGSSKLVPVGYGIKKLQIQCVVEDDKVGTDVLEEKITAFEDFVQSMDVAAFNKI</sequence>
<feature type="initiator methionine" description="Removed" evidence="1">
    <location>
        <position position="1"/>
    </location>
</feature>
<feature type="chain" id="PRO_0000155026" description="Elongation factor 1-beta">
    <location>
        <begin position="2"/>
        <end position="227"/>
    </location>
</feature>
<feature type="domain" description="GST C-terminal">
    <location>
        <begin position="2"/>
        <end position="90"/>
    </location>
</feature>
<feature type="region of interest" description="Disordered" evidence="5">
    <location>
        <begin position="83"/>
        <end position="120"/>
    </location>
</feature>
<feature type="compositionally biased region" description="Acidic residues" evidence="5">
    <location>
        <begin position="97"/>
        <end position="115"/>
    </location>
</feature>
<feature type="modified residue" description="Phosphoserine; by CK2" evidence="1">
    <location>
        <position position="108"/>
    </location>
</feature>
<feature type="sequence conflict" description="In Ref. 2; AA sequence and 3; AA sequence." evidence="6" ref="2 3">
    <original>T</original>
    <variation>G</variation>
    <location>
        <position position="210"/>
    </location>
</feature>
<accession>P30151</accession>
<comment type="function">
    <text evidence="4">Catalytic subunit of the guanine nucleotide exchange factor (GEF) (eEF1B subcomplex) of the eukaryotic elongation factor 1 complex (eEF1). Stimulates the exchange of GDP for GTP on elongation factor 1A (eEF1A), probably by displacing GDP from the nucleotide binding pocket in eEF1A.</text>
</comment>
<comment type="subunit">
    <text evidence="2 3">EF-1 is composed of 4 subunits: alpha, beta (alpha subunit of the eEF1B subcomplex), delta (beta subunit of the eEF1B subcomplex), and gamma (gamma subunit of the eEF1B subcomplex) (By similarity). Interacts with elongation factor EEF1A1 (By similarity).</text>
</comment>
<comment type="PTM">
    <text evidence="1">Phosphorylation affects the GDP/GTP exchange rate.</text>
</comment>
<comment type="similarity">
    <text evidence="6">Belongs to the EF-1-beta/EF-1-delta family.</text>
</comment>
<proteinExistence type="evidence at protein level"/>
<gene>
    <name type="primary">eef1b</name>
</gene>
<protein>
    <recommendedName>
        <fullName>Elongation factor 1-beta</fullName>
        <shortName>EF-1-beta</shortName>
    </recommendedName>
    <alternativeName>
        <fullName>p30</fullName>
    </alternativeName>
</protein>
<evidence type="ECO:0000250" key="1"/>
<evidence type="ECO:0000250" key="2">
    <source>
        <dbReference type="UniProtKB" id="A6IPG1"/>
    </source>
</evidence>
<evidence type="ECO:0000250" key="3">
    <source>
        <dbReference type="UniProtKB" id="O70251"/>
    </source>
</evidence>
<evidence type="ECO:0000250" key="4">
    <source>
        <dbReference type="UniProtKB" id="P32471"/>
    </source>
</evidence>
<evidence type="ECO:0000256" key="5">
    <source>
        <dbReference type="SAM" id="MobiDB-lite"/>
    </source>
</evidence>
<evidence type="ECO:0000305" key="6"/>